<gene>
    <name evidence="1" type="primary">lpxA</name>
    <name type="ordered locus">PputGB1_1158</name>
</gene>
<keyword id="KW-0012">Acyltransferase</keyword>
<keyword id="KW-0963">Cytoplasm</keyword>
<keyword id="KW-0441">Lipid A biosynthesis</keyword>
<keyword id="KW-0444">Lipid biosynthesis</keyword>
<keyword id="KW-0443">Lipid metabolism</keyword>
<keyword id="KW-0677">Repeat</keyword>
<keyword id="KW-0808">Transferase</keyword>
<feature type="chain" id="PRO_1000080211" description="Acyl-[acyl-carrier-protein]--UDP-N-acetylglucosamine O-acyltransferase">
    <location>
        <begin position="1"/>
        <end position="258"/>
    </location>
</feature>
<name>LPXA_PSEPG</name>
<comment type="function">
    <text evidence="1">Involved in the biosynthesis of lipid A, a phosphorylated glycolipid that anchors the lipopolysaccharide to the outer membrane of the cell.</text>
</comment>
<comment type="catalytic activity">
    <reaction evidence="1">
        <text>a (3R)-hydroxyacyl-[ACP] + UDP-N-acetyl-alpha-D-glucosamine = a UDP-3-O-[(3R)-3-hydroxyacyl]-N-acetyl-alpha-D-glucosamine + holo-[ACP]</text>
        <dbReference type="Rhea" id="RHEA:67812"/>
        <dbReference type="Rhea" id="RHEA-COMP:9685"/>
        <dbReference type="Rhea" id="RHEA-COMP:9945"/>
        <dbReference type="ChEBI" id="CHEBI:57705"/>
        <dbReference type="ChEBI" id="CHEBI:64479"/>
        <dbReference type="ChEBI" id="CHEBI:78827"/>
        <dbReference type="ChEBI" id="CHEBI:173225"/>
        <dbReference type="EC" id="2.3.1.129"/>
    </reaction>
</comment>
<comment type="pathway">
    <text evidence="1">Glycolipid biosynthesis; lipid IV(A) biosynthesis; lipid IV(A) from (3R)-3-hydroxytetradecanoyl-[acyl-carrier-protein] and UDP-N-acetyl-alpha-D-glucosamine: step 1/6.</text>
</comment>
<comment type="subunit">
    <text evidence="1">Homotrimer.</text>
</comment>
<comment type="subcellular location">
    <subcellularLocation>
        <location evidence="1">Cytoplasm</location>
    </subcellularLocation>
</comment>
<comment type="similarity">
    <text evidence="1">Belongs to the transferase hexapeptide repeat family. LpxA subfamily.</text>
</comment>
<dbReference type="EC" id="2.3.1.129" evidence="1"/>
<dbReference type="EMBL" id="CP000926">
    <property type="protein sequence ID" value="ABY97066.1"/>
    <property type="molecule type" value="Genomic_DNA"/>
</dbReference>
<dbReference type="RefSeq" id="WP_012270845.1">
    <property type="nucleotide sequence ID" value="NC_010322.1"/>
</dbReference>
<dbReference type="SMR" id="B0KSB1"/>
<dbReference type="KEGG" id="ppg:PputGB1_1158"/>
<dbReference type="eggNOG" id="COG1043">
    <property type="taxonomic scope" value="Bacteria"/>
</dbReference>
<dbReference type="HOGENOM" id="CLU_061249_0_0_6"/>
<dbReference type="UniPathway" id="UPA00359">
    <property type="reaction ID" value="UER00477"/>
</dbReference>
<dbReference type="Proteomes" id="UP000002157">
    <property type="component" value="Chromosome"/>
</dbReference>
<dbReference type="GO" id="GO:0005737">
    <property type="term" value="C:cytoplasm"/>
    <property type="evidence" value="ECO:0007669"/>
    <property type="project" value="UniProtKB-SubCell"/>
</dbReference>
<dbReference type="GO" id="GO:0016020">
    <property type="term" value="C:membrane"/>
    <property type="evidence" value="ECO:0007669"/>
    <property type="project" value="GOC"/>
</dbReference>
<dbReference type="GO" id="GO:0008780">
    <property type="term" value="F:acyl-[acyl-carrier-protein]-UDP-N-acetylglucosamine O-acyltransferase activity"/>
    <property type="evidence" value="ECO:0007669"/>
    <property type="project" value="UniProtKB-UniRule"/>
</dbReference>
<dbReference type="GO" id="GO:0009245">
    <property type="term" value="P:lipid A biosynthetic process"/>
    <property type="evidence" value="ECO:0007669"/>
    <property type="project" value="UniProtKB-UniRule"/>
</dbReference>
<dbReference type="CDD" id="cd03351">
    <property type="entry name" value="LbH_UDP-GlcNAc_AT"/>
    <property type="match status" value="1"/>
</dbReference>
<dbReference type="FunFam" id="2.160.10.10:FF:000003">
    <property type="entry name" value="Acyl-[acyl-carrier-protein]--UDP-N-acetylglucosamine O-acyltransferase"/>
    <property type="match status" value="1"/>
</dbReference>
<dbReference type="Gene3D" id="2.160.10.10">
    <property type="entry name" value="Hexapeptide repeat proteins"/>
    <property type="match status" value="1"/>
</dbReference>
<dbReference type="Gene3D" id="1.20.1180.10">
    <property type="entry name" value="Udp N-acetylglucosamine O-acyltransferase, C-terminal domain"/>
    <property type="match status" value="1"/>
</dbReference>
<dbReference type="HAMAP" id="MF_00387">
    <property type="entry name" value="LpxA"/>
    <property type="match status" value="1"/>
</dbReference>
<dbReference type="InterPro" id="IPR029098">
    <property type="entry name" value="Acetyltransf_C"/>
</dbReference>
<dbReference type="InterPro" id="IPR037157">
    <property type="entry name" value="Acetyltransf_C_sf"/>
</dbReference>
<dbReference type="InterPro" id="IPR001451">
    <property type="entry name" value="Hexapep"/>
</dbReference>
<dbReference type="InterPro" id="IPR018357">
    <property type="entry name" value="Hexapep_transf_CS"/>
</dbReference>
<dbReference type="InterPro" id="IPR010137">
    <property type="entry name" value="Lipid_A_LpxA"/>
</dbReference>
<dbReference type="InterPro" id="IPR011004">
    <property type="entry name" value="Trimer_LpxA-like_sf"/>
</dbReference>
<dbReference type="NCBIfam" id="TIGR01852">
    <property type="entry name" value="lipid_A_lpxA"/>
    <property type="match status" value="1"/>
</dbReference>
<dbReference type="NCBIfam" id="NF003657">
    <property type="entry name" value="PRK05289.1"/>
    <property type="match status" value="1"/>
</dbReference>
<dbReference type="PANTHER" id="PTHR43480">
    <property type="entry name" value="ACYL-[ACYL-CARRIER-PROTEIN]--UDP-N-ACETYLGLUCOSAMINE O-ACYLTRANSFERASE"/>
    <property type="match status" value="1"/>
</dbReference>
<dbReference type="PANTHER" id="PTHR43480:SF1">
    <property type="entry name" value="ACYL-[ACYL-CARRIER-PROTEIN]--UDP-N-ACETYLGLUCOSAMINE O-ACYLTRANSFERASE, MITOCHONDRIAL-RELATED"/>
    <property type="match status" value="1"/>
</dbReference>
<dbReference type="Pfam" id="PF13720">
    <property type="entry name" value="Acetyltransf_11"/>
    <property type="match status" value="1"/>
</dbReference>
<dbReference type="Pfam" id="PF00132">
    <property type="entry name" value="Hexapep"/>
    <property type="match status" value="2"/>
</dbReference>
<dbReference type="PIRSF" id="PIRSF000456">
    <property type="entry name" value="UDP-GlcNAc_acltr"/>
    <property type="match status" value="1"/>
</dbReference>
<dbReference type="SUPFAM" id="SSF51161">
    <property type="entry name" value="Trimeric LpxA-like enzymes"/>
    <property type="match status" value="1"/>
</dbReference>
<dbReference type="PROSITE" id="PS00101">
    <property type="entry name" value="HEXAPEP_TRANSFERASES"/>
    <property type="match status" value="1"/>
</dbReference>
<sequence length="258" mass="28063">MNSIDPRAIIDPSAKLADGVEVGPWSIVGPDVEIGEGTVIGPHVVLKGPTRIGKHNRIFQFSSIGEDTPDLKYKGEPTRLVIGDHNVIREGVTIHRGTVQDRAETTVGDHNLIMAYAHIGHDSVIGNHCILVNNTALAGHVHVGDWAILSGYTLVHQYCHIGAHAFSGMGTAIGKDVPAFVTVFGSPAEARSMNFEGMRRRGFSDEVIHVLRRCYKIVYRQGLTVEDALKELAEPAAQHPEVELFRQSIVSSARGITR</sequence>
<evidence type="ECO:0000255" key="1">
    <source>
        <dbReference type="HAMAP-Rule" id="MF_00387"/>
    </source>
</evidence>
<proteinExistence type="inferred from homology"/>
<reference key="1">
    <citation type="submission" date="2008-01" db="EMBL/GenBank/DDBJ databases">
        <title>Complete sequence of Pseudomonas putida GB-1.</title>
        <authorList>
            <consortium name="US DOE Joint Genome Institute"/>
            <person name="Copeland A."/>
            <person name="Lucas S."/>
            <person name="Lapidus A."/>
            <person name="Barry K."/>
            <person name="Glavina del Rio T."/>
            <person name="Dalin E."/>
            <person name="Tice H."/>
            <person name="Pitluck S."/>
            <person name="Bruce D."/>
            <person name="Goodwin L."/>
            <person name="Chertkov O."/>
            <person name="Brettin T."/>
            <person name="Detter J.C."/>
            <person name="Han C."/>
            <person name="Kuske C.R."/>
            <person name="Schmutz J."/>
            <person name="Larimer F."/>
            <person name="Land M."/>
            <person name="Hauser L."/>
            <person name="Kyrpides N."/>
            <person name="Kim E."/>
            <person name="McCarthy J.K."/>
            <person name="Richardson P."/>
        </authorList>
    </citation>
    <scope>NUCLEOTIDE SEQUENCE [LARGE SCALE GENOMIC DNA]</scope>
    <source>
        <strain>GB-1</strain>
    </source>
</reference>
<accession>B0KSB1</accession>
<protein>
    <recommendedName>
        <fullName evidence="1">Acyl-[acyl-carrier-protein]--UDP-N-acetylglucosamine O-acyltransferase</fullName>
        <shortName evidence="1">UDP-N-acetylglucosamine acyltransferase</shortName>
        <ecNumber evidence="1">2.3.1.129</ecNumber>
    </recommendedName>
</protein>
<organism>
    <name type="scientific">Pseudomonas putida (strain GB-1)</name>
    <dbReference type="NCBI Taxonomy" id="76869"/>
    <lineage>
        <taxon>Bacteria</taxon>
        <taxon>Pseudomonadati</taxon>
        <taxon>Pseudomonadota</taxon>
        <taxon>Gammaproteobacteria</taxon>
        <taxon>Pseudomonadales</taxon>
        <taxon>Pseudomonadaceae</taxon>
        <taxon>Pseudomonas</taxon>
    </lineage>
</organism>